<keyword id="KW-0687">Ribonucleoprotein</keyword>
<keyword id="KW-0689">Ribosomal protein</keyword>
<keyword id="KW-0694">RNA-binding</keyword>
<keyword id="KW-0699">rRNA-binding</keyword>
<reference key="1">
    <citation type="journal article" date="2004" name="Proc. Natl. Acad. Sci. U.S.A.">
        <title>Genomic analysis of Bacteroides fragilis reveals extensive DNA inversions regulating cell surface adaptation.</title>
        <authorList>
            <person name="Kuwahara T."/>
            <person name="Yamashita A."/>
            <person name="Hirakawa H."/>
            <person name="Nakayama H."/>
            <person name="Toh H."/>
            <person name="Okada N."/>
            <person name="Kuhara S."/>
            <person name="Hattori M."/>
            <person name="Hayashi T."/>
            <person name="Ohnishi Y."/>
        </authorList>
    </citation>
    <scope>NUCLEOTIDE SEQUENCE [LARGE SCALE GENOMIC DNA]</scope>
    <source>
        <strain>YCH46</strain>
    </source>
</reference>
<comment type="function">
    <text evidence="1">One of the primary rRNA binding proteins. Required for association of the 30S and 50S subunits to form the 70S ribosome, for tRNA binding and peptide bond formation. It has been suggested to have peptidyltransferase activity; this is somewhat controversial. Makes several contacts with the 16S rRNA in the 70S ribosome.</text>
</comment>
<comment type="subunit">
    <text evidence="1">Part of the 50S ribosomal subunit. Forms a bridge to the 30S subunit in the 70S ribosome.</text>
</comment>
<comment type="similarity">
    <text evidence="1">Belongs to the universal ribosomal protein uL2 family.</text>
</comment>
<accession>Q64NL1</accession>
<gene>
    <name evidence="1" type="primary">rplB</name>
    <name type="ordered locus">BF4178</name>
</gene>
<proteinExistence type="inferred from homology"/>
<name>RL2_BACFR</name>
<feature type="chain" id="PRO_0000237154" description="Large ribosomal subunit protein uL2">
    <location>
        <begin position="1"/>
        <end position="274"/>
    </location>
</feature>
<feature type="region of interest" description="Disordered" evidence="2">
    <location>
        <begin position="195"/>
        <end position="274"/>
    </location>
</feature>
<feature type="compositionally biased region" description="Basic residues" evidence="2">
    <location>
        <begin position="209"/>
        <end position="220"/>
    </location>
</feature>
<feature type="compositionally biased region" description="Basic residues" evidence="2">
    <location>
        <begin position="244"/>
        <end position="264"/>
    </location>
</feature>
<organism>
    <name type="scientific">Bacteroides fragilis (strain YCH46)</name>
    <dbReference type="NCBI Taxonomy" id="295405"/>
    <lineage>
        <taxon>Bacteria</taxon>
        <taxon>Pseudomonadati</taxon>
        <taxon>Bacteroidota</taxon>
        <taxon>Bacteroidia</taxon>
        <taxon>Bacteroidales</taxon>
        <taxon>Bacteroidaceae</taxon>
        <taxon>Bacteroides</taxon>
    </lineage>
</organism>
<dbReference type="EMBL" id="AP006841">
    <property type="protein sequence ID" value="BAD50921.1"/>
    <property type="molecule type" value="Genomic_DNA"/>
</dbReference>
<dbReference type="RefSeq" id="WP_005791545.1">
    <property type="nucleotide sequence ID" value="NZ_UYXF01000007.1"/>
</dbReference>
<dbReference type="RefSeq" id="YP_101455.1">
    <property type="nucleotide sequence ID" value="NC_006347.1"/>
</dbReference>
<dbReference type="SMR" id="Q64NL1"/>
<dbReference type="STRING" id="295405.BF4178"/>
<dbReference type="GeneID" id="60368600"/>
<dbReference type="KEGG" id="bfr:BF4178"/>
<dbReference type="PATRIC" id="fig|295405.11.peg.4032"/>
<dbReference type="HOGENOM" id="CLU_036235_2_1_10"/>
<dbReference type="OrthoDB" id="9778722at2"/>
<dbReference type="Proteomes" id="UP000002197">
    <property type="component" value="Chromosome"/>
</dbReference>
<dbReference type="GO" id="GO:0015934">
    <property type="term" value="C:large ribosomal subunit"/>
    <property type="evidence" value="ECO:0007669"/>
    <property type="project" value="InterPro"/>
</dbReference>
<dbReference type="GO" id="GO:0019843">
    <property type="term" value="F:rRNA binding"/>
    <property type="evidence" value="ECO:0007669"/>
    <property type="project" value="UniProtKB-UniRule"/>
</dbReference>
<dbReference type="GO" id="GO:0003735">
    <property type="term" value="F:structural constituent of ribosome"/>
    <property type="evidence" value="ECO:0007669"/>
    <property type="project" value="InterPro"/>
</dbReference>
<dbReference type="GO" id="GO:0016740">
    <property type="term" value="F:transferase activity"/>
    <property type="evidence" value="ECO:0007669"/>
    <property type="project" value="InterPro"/>
</dbReference>
<dbReference type="GO" id="GO:0002181">
    <property type="term" value="P:cytoplasmic translation"/>
    <property type="evidence" value="ECO:0007669"/>
    <property type="project" value="TreeGrafter"/>
</dbReference>
<dbReference type="FunFam" id="2.30.30.30:FF:000001">
    <property type="entry name" value="50S ribosomal protein L2"/>
    <property type="match status" value="1"/>
</dbReference>
<dbReference type="FunFam" id="2.40.50.140:FF:000003">
    <property type="entry name" value="50S ribosomal protein L2"/>
    <property type="match status" value="1"/>
</dbReference>
<dbReference type="FunFam" id="4.10.950.10:FF:000001">
    <property type="entry name" value="50S ribosomal protein L2"/>
    <property type="match status" value="1"/>
</dbReference>
<dbReference type="Gene3D" id="2.30.30.30">
    <property type="match status" value="1"/>
</dbReference>
<dbReference type="Gene3D" id="2.40.50.140">
    <property type="entry name" value="Nucleic acid-binding proteins"/>
    <property type="match status" value="1"/>
</dbReference>
<dbReference type="Gene3D" id="4.10.950.10">
    <property type="entry name" value="Ribosomal protein L2, domain 3"/>
    <property type="match status" value="1"/>
</dbReference>
<dbReference type="HAMAP" id="MF_01320_B">
    <property type="entry name" value="Ribosomal_uL2_B"/>
    <property type="match status" value="1"/>
</dbReference>
<dbReference type="InterPro" id="IPR012340">
    <property type="entry name" value="NA-bd_OB-fold"/>
</dbReference>
<dbReference type="InterPro" id="IPR014722">
    <property type="entry name" value="Rib_uL2_dom2"/>
</dbReference>
<dbReference type="InterPro" id="IPR002171">
    <property type="entry name" value="Ribosomal_uL2"/>
</dbReference>
<dbReference type="InterPro" id="IPR005880">
    <property type="entry name" value="Ribosomal_uL2_bac/org-type"/>
</dbReference>
<dbReference type="InterPro" id="IPR022669">
    <property type="entry name" value="Ribosomal_uL2_C"/>
</dbReference>
<dbReference type="InterPro" id="IPR022671">
    <property type="entry name" value="Ribosomal_uL2_CS"/>
</dbReference>
<dbReference type="InterPro" id="IPR014726">
    <property type="entry name" value="Ribosomal_uL2_dom3"/>
</dbReference>
<dbReference type="InterPro" id="IPR022666">
    <property type="entry name" value="Ribosomal_uL2_RNA-bd_dom"/>
</dbReference>
<dbReference type="InterPro" id="IPR008991">
    <property type="entry name" value="Translation_prot_SH3-like_sf"/>
</dbReference>
<dbReference type="NCBIfam" id="TIGR01171">
    <property type="entry name" value="rplB_bact"/>
    <property type="match status" value="1"/>
</dbReference>
<dbReference type="PANTHER" id="PTHR13691:SF5">
    <property type="entry name" value="LARGE RIBOSOMAL SUBUNIT PROTEIN UL2M"/>
    <property type="match status" value="1"/>
</dbReference>
<dbReference type="PANTHER" id="PTHR13691">
    <property type="entry name" value="RIBOSOMAL PROTEIN L2"/>
    <property type="match status" value="1"/>
</dbReference>
<dbReference type="Pfam" id="PF00181">
    <property type="entry name" value="Ribosomal_L2"/>
    <property type="match status" value="1"/>
</dbReference>
<dbReference type="Pfam" id="PF03947">
    <property type="entry name" value="Ribosomal_L2_C"/>
    <property type="match status" value="1"/>
</dbReference>
<dbReference type="PIRSF" id="PIRSF002158">
    <property type="entry name" value="Ribosomal_L2"/>
    <property type="match status" value="1"/>
</dbReference>
<dbReference type="SMART" id="SM01383">
    <property type="entry name" value="Ribosomal_L2"/>
    <property type="match status" value="1"/>
</dbReference>
<dbReference type="SMART" id="SM01382">
    <property type="entry name" value="Ribosomal_L2_C"/>
    <property type="match status" value="1"/>
</dbReference>
<dbReference type="SUPFAM" id="SSF50249">
    <property type="entry name" value="Nucleic acid-binding proteins"/>
    <property type="match status" value="1"/>
</dbReference>
<dbReference type="SUPFAM" id="SSF50104">
    <property type="entry name" value="Translation proteins SH3-like domain"/>
    <property type="match status" value="1"/>
</dbReference>
<dbReference type="PROSITE" id="PS00467">
    <property type="entry name" value="RIBOSOMAL_L2"/>
    <property type="match status" value="1"/>
</dbReference>
<sequence>MAVRKFKPTTPGQRHKIIGTFEEITASVPEKSLVYGKKSSGGRNNEGKMTMRYLGGGHRKVIRIVDFKRNKDGVPAVVKTIEYDPNRSARIALLFYADGEKRYIIAPNGLQVGATLMSGENAAPEIGNALPLQNIPVGTVIHNIELRPGQGAALVRSAGNFAQLTSREGKYCVIKLPSGEVRQILSTCKATIGSVGNSDHGLESSGKAGRSRWQGRRPRNRGVVMNPVDHPMGGGEGRASGGHPRSRKGLYAKGLKTRAPKKQSSKYIIERRKK</sequence>
<evidence type="ECO:0000255" key="1">
    <source>
        <dbReference type="HAMAP-Rule" id="MF_01320"/>
    </source>
</evidence>
<evidence type="ECO:0000256" key="2">
    <source>
        <dbReference type="SAM" id="MobiDB-lite"/>
    </source>
</evidence>
<evidence type="ECO:0000305" key="3"/>
<protein>
    <recommendedName>
        <fullName evidence="1">Large ribosomal subunit protein uL2</fullName>
    </recommendedName>
    <alternativeName>
        <fullName evidence="3">50S ribosomal protein L2</fullName>
    </alternativeName>
</protein>